<evidence type="ECO:0000250" key="1">
    <source>
        <dbReference type="UniProtKB" id="P05106"/>
    </source>
</evidence>
<evidence type="ECO:0000250" key="2">
    <source>
        <dbReference type="UniProtKB" id="P18564"/>
    </source>
</evidence>
<evidence type="ECO:0000250" key="3">
    <source>
        <dbReference type="UniProtKB" id="Q9Z0T9"/>
    </source>
</evidence>
<evidence type="ECO:0000255" key="4"/>
<evidence type="ECO:0000255" key="5">
    <source>
        <dbReference type="PROSITE-ProRule" id="PRU01392"/>
    </source>
</evidence>
<evidence type="ECO:0000305" key="6"/>
<reference key="1">
    <citation type="journal article" date="2003" name="J. Virol.">
        <title>Foot-and-mouth disease virus receptors: comparison of bovine alpha(V) integrin utilization by type A and O viruses.</title>
        <authorList>
            <person name="Duque H."/>
            <person name="Baxt B."/>
        </authorList>
    </citation>
    <scope>NUCLEOTIDE SEQUENCE [MRNA]</scope>
    <scope>CHARACTERIZATION AS A FMDV RECEPTOR</scope>
</reference>
<reference key="2">
    <citation type="submission" date="2006-07" db="EMBL/GenBank/DDBJ databases">
        <title>Molecular cloning and characterization of cDNA encoding bovine beta6 subunit.</title>
        <authorList>
            <person name="Du J.-Z."/>
            <person name="Chang H.-Y."/>
            <person name="Cong G."/>
            <person name="Shao J.-J."/>
            <person name="Lin T."/>
            <person name="Cai X."/>
            <person name="Xie Q."/>
        </authorList>
    </citation>
    <scope>NUCLEOTIDE SEQUENCE [MRNA]</scope>
    <source>
        <tissue>Tongue</tissue>
    </source>
</reference>
<name>ITB6_BOVIN</name>
<protein>
    <recommendedName>
        <fullName>Integrin beta-6</fullName>
    </recommendedName>
</protein>
<keyword id="KW-0106">Calcium</keyword>
<keyword id="KW-0130">Cell adhesion</keyword>
<keyword id="KW-0965">Cell junction</keyword>
<keyword id="KW-1003">Cell membrane</keyword>
<keyword id="KW-1015">Disulfide bond</keyword>
<keyword id="KW-0245">EGF-like domain</keyword>
<keyword id="KW-0325">Glycoprotein</keyword>
<keyword id="KW-1183">Host cell receptor for virus entry</keyword>
<keyword id="KW-0945">Host-virus interaction</keyword>
<keyword id="KW-0401">Integrin</keyword>
<keyword id="KW-0460">Magnesium</keyword>
<keyword id="KW-0472">Membrane</keyword>
<keyword id="KW-0479">Metal-binding</keyword>
<keyword id="KW-0675">Receptor</keyword>
<keyword id="KW-1185">Reference proteome</keyword>
<keyword id="KW-0677">Repeat</keyword>
<keyword id="KW-0732">Signal</keyword>
<keyword id="KW-0812">Transmembrane</keyword>
<keyword id="KW-1133">Transmembrane helix</keyword>
<comment type="function">
    <text evidence="2 3">Integrin alpha-V:beta-6 (ITGAV:ITGB6) is a receptor for fibronectin and cytotactin (By similarity). It recognizes the sequence R-G-D in its ligands (By similarity). ITGAV:ITGB6 acts as a receptor for fibrillin-1 (FBN1) and mediates R-G-D-dependent cell adhesion to FBN1 (By similarity). Integrin alpha-V:beta-6 (ITGAV:ITGB6) mediates R-G-D-dependent release of transforming growth factor beta-1 (TGF-beta-1) from regulatory Latency-associated peptide (LAP), thereby playing a key role in TGF-beta-1 activation (By similarity).</text>
</comment>
<comment type="subunit">
    <text evidence="2 3">Heterodimer of an alpha and a beta subunit (By similarity). Interacts with FLNB. Interacts with HAX1. ITGAV:ITGB6 interacts with FBN1 (By similarity). ITGAV:ITGB6 interacts with TGFB1 (By similarity).</text>
</comment>
<comment type="subcellular location">
    <subcellularLocation>
        <location evidence="2">Cell membrane</location>
        <topology evidence="2">Single-pass type I membrane protein</topology>
    </subcellularLocation>
    <subcellularLocation>
        <location evidence="2">Cell junction</location>
        <location evidence="2">Focal adhesion</location>
    </subcellularLocation>
</comment>
<comment type="domain">
    <text evidence="1">The VWFA domain (or beta I domain) contains three cation-binding sites: the ligand-associated metal ion-binding site (LIMBS or SyMBS), the metal ion-dependent adhesion site (MIDAS), and the adjacent MIDAS site (ADMIDAS). This domain is also part of the ligand-binding site.</text>
</comment>
<comment type="similarity">
    <text evidence="6">Belongs to the integrin beta chain family.</text>
</comment>
<organism>
    <name type="scientific">Bos taurus</name>
    <name type="common">Bovine</name>
    <dbReference type="NCBI Taxonomy" id="9913"/>
    <lineage>
        <taxon>Eukaryota</taxon>
        <taxon>Metazoa</taxon>
        <taxon>Chordata</taxon>
        <taxon>Craniata</taxon>
        <taxon>Vertebrata</taxon>
        <taxon>Euteleostomi</taxon>
        <taxon>Mammalia</taxon>
        <taxon>Eutheria</taxon>
        <taxon>Laurasiatheria</taxon>
        <taxon>Artiodactyla</taxon>
        <taxon>Ruminantia</taxon>
        <taxon>Pecora</taxon>
        <taxon>Bovidae</taxon>
        <taxon>Bovinae</taxon>
        <taxon>Bos</taxon>
    </lineage>
</organism>
<gene>
    <name type="primary">ITGB6</name>
</gene>
<dbReference type="EMBL" id="AF468060">
    <property type="protein sequence ID" value="AAL78039.1"/>
    <property type="molecule type" value="mRNA"/>
</dbReference>
<dbReference type="EMBL" id="DQ867017">
    <property type="protein sequence ID" value="ABH04286.1"/>
    <property type="molecule type" value="mRNA"/>
</dbReference>
<dbReference type="RefSeq" id="NP_001415189.1">
    <property type="nucleotide sequence ID" value="NM_001428260.1"/>
</dbReference>
<dbReference type="RefSeq" id="NP_777123.1">
    <property type="nucleotide sequence ID" value="NM_174698.3"/>
</dbReference>
<dbReference type="RefSeq" id="XP_005202466.1">
    <property type="nucleotide sequence ID" value="XM_005202409.3"/>
</dbReference>
<dbReference type="SMR" id="Q8SQB8"/>
<dbReference type="FunCoup" id="Q8SQB8">
    <property type="interactions" value="190"/>
</dbReference>
<dbReference type="STRING" id="9913.ENSBTAP00000011972"/>
<dbReference type="GlyCosmos" id="Q8SQB8">
    <property type="glycosylation" value="9 sites, No reported glycans"/>
</dbReference>
<dbReference type="GlyGen" id="Q8SQB8">
    <property type="glycosylation" value="9 sites"/>
</dbReference>
<dbReference type="PaxDb" id="9913-ENSBTAP00000011972"/>
<dbReference type="GeneID" id="282644"/>
<dbReference type="KEGG" id="bta:282644"/>
<dbReference type="CTD" id="3694"/>
<dbReference type="VEuPathDB" id="HostDB:ENSBTAG00000009080"/>
<dbReference type="eggNOG" id="KOG1226">
    <property type="taxonomic scope" value="Eukaryota"/>
</dbReference>
<dbReference type="HOGENOM" id="CLU_011772_0_1_1"/>
<dbReference type="InParanoid" id="Q8SQB8"/>
<dbReference type="OMA" id="WIYTVEG"/>
<dbReference type="OrthoDB" id="410592at2759"/>
<dbReference type="TreeFam" id="TF105392"/>
<dbReference type="Reactome" id="R-BTA-1566948">
    <property type="pathway name" value="Elastic fibre formation"/>
</dbReference>
<dbReference type="Reactome" id="R-BTA-2129379">
    <property type="pathway name" value="Molecules associated with elastic fibres"/>
</dbReference>
<dbReference type="Reactome" id="R-BTA-216083">
    <property type="pathway name" value="Integrin cell surface interactions"/>
</dbReference>
<dbReference type="Reactome" id="R-BTA-2173789">
    <property type="pathway name" value="TGF-beta receptor signaling activates SMADs"/>
</dbReference>
<dbReference type="Reactome" id="R-BTA-3000178">
    <property type="pathway name" value="ECM proteoglycans"/>
</dbReference>
<dbReference type="Proteomes" id="UP000009136">
    <property type="component" value="Chromosome 2"/>
</dbReference>
<dbReference type="Bgee" id="ENSBTAG00000009080">
    <property type="expression patterns" value="Expressed in gluteus medius and 70 other cell types or tissues"/>
</dbReference>
<dbReference type="GO" id="GO:0009986">
    <property type="term" value="C:cell surface"/>
    <property type="evidence" value="ECO:0000318"/>
    <property type="project" value="GO_Central"/>
</dbReference>
<dbReference type="GO" id="GO:0009897">
    <property type="term" value="C:external side of plasma membrane"/>
    <property type="evidence" value="ECO:0007669"/>
    <property type="project" value="Ensembl"/>
</dbReference>
<dbReference type="GO" id="GO:0005925">
    <property type="term" value="C:focal adhesion"/>
    <property type="evidence" value="ECO:0000250"/>
    <property type="project" value="UniProtKB"/>
</dbReference>
<dbReference type="GO" id="GO:0034685">
    <property type="term" value="C:integrin alphav-beta6 complex"/>
    <property type="evidence" value="ECO:0000250"/>
    <property type="project" value="UniProtKB"/>
</dbReference>
<dbReference type="GO" id="GO:0005178">
    <property type="term" value="F:integrin binding"/>
    <property type="evidence" value="ECO:0000318"/>
    <property type="project" value="GO_Central"/>
</dbReference>
<dbReference type="GO" id="GO:0046872">
    <property type="term" value="F:metal ion binding"/>
    <property type="evidence" value="ECO:0007669"/>
    <property type="project" value="UniProtKB-KW"/>
</dbReference>
<dbReference type="GO" id="GO:0140677">
    <property type="term" value="F:molecular function activator activity"/>
    <property type="evidence" value="ECO:0007669"/>
    <property type="project" value="Ensembl"/>
</dbReference>
<dbReference type="GO" id="GO:0001618">
    <property type="term" value="F:virus receptor activity"/>
    <property type="evidence" value="ECO:0007669"/>
    <property type="project" value="UniProtKB-KW"/>
</dbReference>
<dbReference type="GO" id="GO:0060348">
    <property type="term" value="P:bone development"/>
    <property type="evidence" value="ECO:0007669"/>
    <property type="project" value="Ensembl"/>
</dbReference>
<dbReference type="GO" id="GO:0060435">
    <property type="term" value="P:bronchiole development"/>
    <property type="evidence" value="ECO:0007669"/>
    <property type="project" value="Ensembl"/>
</dbReference>
<dbReference type="GO" id="GO:0033627">
    <property type="term" value="P:cell adhesion mediated by integrin"/>
    <property type="evidence" value="ECO:0000250"/>
    <property type="project" value="UniProtKB"/>
</dbReference>
<dbReference type="GO" id="GO:0016477">
    <property type="term" value="P:cell migration"/>
    <property type="evidence" value="ECO:0000318"/>
    <property type="project" value="GO_Central"/>
</dbReference>
<dbReference type="GO" id="GO:0000902">
    <property type="term" value="P:cell morphogenesis"/>
    <property type="evidence" value="ECO:0007669"/>
    <property type="project" value="Ensembl"/>
</dbReference>
<dbReference type="GO" id="GO:0098609">
    <property type="term" value="P:cell-cell adhesion"/>
    <property type="evidence" value="ECO:0000318"/>
    <property type="project" value="GO_Central"/>
</dbReference>
<dbReference type="GO" id="GO:0007160">
    <property type="term" value="P:cell-matrix adhesion"/>
    <property type="evidence" value="ECO:0000318"/>
    <property type="project" value="GO_Central"/>
</dbReference>
<dbReference type="GO" id="GO:0071479">
    <property type="term" value="P:cellular response to ionizing radiation"/>
    <property type="evidence" value="ECO:0007669"/>
    <property type="project" value="Ensembl"/>
</dbReference>
<dbReference type="GO" id="GO:0070166">
    <property type="term" value="P:enamel mineralization"/>
    <property type="evidence" value="ECO:0007669"/>
    <property type="project" value="Ensembl"/>
</dbReference>
<dbReference type="GO" id="GO:0060022">
    <property type="term" value="P:hard palate development"/>
    <property type="evidence" value="ECO:0007669"/>
    <property type="project" value="Ensembl"/>
</dbReference>
<dbReference type="GO" id="GO:0006955">
    <property type="term" value="P:immune response"/>
    <property type="evidence" value="ECO:0007669"/>
    <property type="project" value="Ensembl"/>
</dbReference>
<dbReference type="GO" id="GO:0006954">
    <property type="term" value="P:inflammatory response"/>
    <property type="evidence" value="ECO:0007669"/>
    <property type="project" value="Ensembl"/>
</dbReference>
<dbReference type="GO" id="GO:0007229">
    <property type="term" value="P:integrin-mediated signaling pathway"/>
    <property type="evidence" value="ECO:0000318"/>
    <property type="project" value="GO_Central"/>
</dbReference>
<dbReference type="GO" id="GO:0061520">
    <property type="term" value="P:Langerhans cell differentiation"/>
    <property type="evidence" value="ECO:0007669"/>
    <property type="project" value="Ensembl"/>
</dbReference>
<dbReference type="GO" id="GO:0048286">
    <property type="term" value="P:lung alveolus development"/>
    <property type="evidence" value="ECO:0007669"/>
    <property type="project" value="Ensembl"/>
</dbReference>
<dbReference type="GO" id="GO:0055091">
    <property type="term" value="P:phospholipid homeostasis"/>
    <property type="evidence" value="ECO:0007669"/>
    <property type="project" value="Ensembl"/>
</dbReference>
<dbReference type="GO" id="GO:0009615">
    <property type="term" value="P:response to virus"/>
    <property type="evidence" value="ECO:0007669"/>
    <property type="project" value="Ensembl"/>
</dbReference>
<dbReference type="GO" id="GO:0043588">
    <property type="term" value="P:skin development"/>
    <property type="evidence" value="ECO:0007669"/>
    <property type="project" value="Ensembl"/>
</dbReference>
<dbReference type="GO" id="GO:0043129">
    <property type="term" value="P:surfactant homeostasis"/>
    <property type="evidence" value="ECO:0007669"/>
    <property type="project" value="Ensembl"/>
</dbReference>
<dbReference type="GO" id="GO:0071604">
    <property type="term" value="P:transforming growth factor beta production"/>
    <property type="evidence" value="ECO:0007669"/>
    <property type="project" value="Ensembl"/>
</dbReference>
<dbReference type="GO" id="GO:0007179">
    <property type="term" value="P:transforming growth factor beta receptor signaling pathway"/>
    <property type="evidence" value="ECO:0007669"/>
    <property type="project" value="Ensembl"/>
</dbReference>
<dbReference type="GO" id="GO:0042060">
    <property type="term" value="P:wound healing"/>
    <property type="evidence" value="ECO:0007669"/>
    <property type="project" value="Ensembl"/>
</dbReference>
<dbReference type="FunFam" id="1.20.5.100:FF:000004">
    <property type="entry name" value="Integrin beta"/>
    <property type="match status" value="1"/>
</dbReference>
<dbReference type="FunFam" id="2.10.25.10:FF:000043">
    <property type="entry name" value="Integrin beta"/>
    <property type="match status" value="1"/>
</dbReference>
<dbReference type="FunFam" id="2.10.25.10:FF:000075">
    <property type="entry name" value="Integrin beta"/>
    <property type="match status" value="1"/>
</dbReference>
<dbReference type="FunFam" id="2.10.25.10:FF:000328">
    <property type="entry name" value="Integrin beta"/>
    <property type="match status" value="1"/>
</dbReference>
<dbReference type="FunFam" id="2.60.40.1510:FF:000021">
    <property type="entry name" value="Integrin beta"/>
    <property type="match status" value="1"/>
</dbReference>
<dbReference type="FunFam" id="3.30.1680.10:FF:000002">
    <property type="entry name" value="Integrin beta"/>
    <property type="match status" value="1"/>
</dbReference>
<dbReference type="FunFam" id="3.40.50.410:FF:000002">
    <property type="entry name" value="Integrin beta"/>
    <property type="match status" value="1"/>
</dbReference>
<dbReference type="FunFam" id="4.10.1240.30:FF:000004">
    <property type="entry name" value="Integrin beta"/>
    <property type="match status" value="1"/>
</dbReference>
<dbReference type="Gene3D" id="4.10.1240.30">
    <property type="match status" value="1"/>
</dbReference>
<dbReference type="Gene3D" id="1.20.5.100">
    <property type="entry name" value="Cytochrome c1, transmembrane anchor, C-terminal"/>
    <property type="match status" value="1"/>
</dbReference>
<dbReference type="Gene3D" id="2.10.25.10">
    <property type="entry name" value="Laminin"/>
    <property type="match status" value="4"/>
</dbReference>
<dbReference type="Gene3D" id="3.30.1680.10">
    <property type="entry name" value="ligand-binding face of the semaphorins, domain 2"/>
    <property type="match status" value="1"/>
</dbReference>
<dbReference type="Gene3D" id="2.60.40.1510">
    <property type="entry name" value="ntegrin, alpha v. Chain A, domain 3"/>
    <property type="match status" value="1"/>
</dbReference>
<dbReference type="Gene3D" id="3.40.50.410">
    <property type="entry name" value="von Willebrand factor, type A domain"/>
    <property type="match status" value="1"/>
</dbReference>
<dbReference type="InterPro" id="IPR013111">
    <property type="entry name" value="EGF_extracell"/>
</dbReference>
<dbReference type="InterPro" id="IPR040622">
    <property type="entry name" value="I-EGF_1"/>
</dbReference>
<dbReference type="InterPro" id="IPR033760">
    <property type="entry name" value="Integrin_beta_N"/>
</dbReference>
<dbReference type="InterPro" id="IPR015812">
    <property type="entry name" value="Integrin_bsu"/>
</dbReference>
<dbReference type="InterPro" id="IPR014836">
    <property type="entry name" value="Integrin_bsu_cyt_dom"/>
</dbReference>
<dbReference type="InterPro" id="IPR012896">
    <property type="entry name" value="Integrin_bsu_tail"/>
</dbReference>
<dbReference type="InterPro" id="IPR036349">
    <property type="entry name" value="Integrin_bsu_tail_dom_sf"/>
</dbReference>
<dbReference type="InterPro" id="IPR002369">
    <property type="entry name" value="Integrin_bsu_VWA"/>
</dbReference>
<dbReference type="InterPro" id="IPR032695">
    <property type="entry name" value="Integrin_dom_sf"/>
</dbReference>
<dbReference type="InterPro" id="IPR016201">
    <property type="entry name" value="PSI"/>
</dbReference>
<dbReference type="InterPro" id="IPR036465">
    <property type="entry name" value="vWFA_dom_sf"/>
</dbReference>
<dbReference type="PANTHER" id="PTHR10082">
    <property type="entry name" value="INTEGRIN BETA SUBUNIT"/>
    <property type="match status" value="1"/>
</dbReference>
<dbReference type="PANTHER" id="PTHR10082:SF11">
    <property type="entry name" value="INTEGRIN BETA-6"/>
    <property type="match status" value="1"/>
</dbReference>
<dbReference type="Pfam" id="PF07974">
    <property type="entry name" value="EGF_2"/>
    <property type="match status" value="1"/>
</dbReference>
<dbReference type="Pfam" id="PF23105">
    <property type="entry name" value="EGF_integrin"/>
    <property type="match status" value="1"/>
</dbReference>
<dbReference type="Pfam" id="PF18372">
    <property type="entry name" value="I-EGF_1"/>
    <property type="match status" value="1"/>
</dbReference>
<dbReference type="Pfam" id="PF08725">
    <property type="entry name" value="Integrin_b_cyt"/>
    <property type="match status" value="1"/>
</dbReference>
<dbReference type="Pfam" id="PF07965">
    <property type="entry name" value="Integrin_B_tail"/>
    <property type="match status" value="1"/>
</dbReference>
<dbReference type="Pfam" id="PF00362">
    <property type="entry name" value="Integrin_beta"/>
    <property type="match status" value="1"/>
</dbReference>
<dbReference type="Pfam" id="PF17205">
    <property type="entry name" value="PSI_integrin"/>
    <property type="match status" value="1"/>
</dbReference>
<dbReference type="PIRSF" id="PIRSF002512">
    <property type="entry name" value="Integrin_B"/>
    <property type="match status" value="1"/>
</dbReference>
<dbReference type="PRINTS" id="PR01186">
    <property type="entry name" value="INTEGRINB"/>
</dbReference>
<dbReference type="SMART" id="SM00187">
    <property type="entry name" value="INB"/>
    <property type="match status" value="1"/>
</dbReference>
<dbReference type="SMART" id="SM01241">
    <property type="entry name" value="Integrin_b_cyt"/>
    <property type="match status" value="1"/>
</dbReference>
<dbReference type="SMART" id="SM01242">
    <property type="entry name" value="Integrin_B_tail"/>
    <property type="match status" value="1"/>
</dbReference>
<dbReference type="SMART" id="SM00423">
    <property type="entry name" value="PSI"/>
    <property type="match status" value="1"/>
</dbReference>
<dbReference type="SUPFAM" id="SSF57196">
    <property type="entry name" value="EGF/Laminin"/>
    <property type="match status" value="2"/>
</dbReference>
<dbReference type="SUPFAM" id="SSF69687">
    <property type="entry name" value="Integrin beta tail domain"/>
    <property type="match status" value="1"/>
</dbReference>
<dbReference type="SUPFAM" id="SSF69179">
    <property type="entry name" value="Integrin domains"/>
    <property type="match status" value="2"/>
</dbReference>
<dbReference type="SUPFAM" id="SSF103575">
    <property type="entry name" value="Plexin repeat"/>
    <property type="match status" value="1"/>
</dbReference>
<dbReference type="SUPFAM" id="SSF53300">
    <property type="entry name" value="vWA-like"/>
    <property type="match status" value="1"/>
</dbReference>
<dbReference type="PROSITE" id="PS00022">
    <property type="entry name" value="EGF_1"/>
    <property type="match status" value="2"/>
</dbReference>
<dbReference type="PROSITE" id="PS01186">
    <property type="entry name" value="EGF_2"/>
    <property type="match status" value="1"/>
</dbReference>
<dbReference type="PROSITE" id="PS00243">
    <property type="entry name" value="I_EGF_1"/>
    <property type="match status" value="2"/>
</dbReference>
<dbReference type="PROSITE" id="PS52047">
    <property type="entry name" value="I_EGF_2"/>
    <property type="match status" value="4"/>
</dbReference>
<proteinExistence type="evidence at protein level"/>
<sequence>MGIELLCLFFLCLGRNDHVQGGCAVGGAETCEDCLLIGPQCAWCSQENFTHLSGVGERCDTPANLLAKGCQLTFIENPVSQVEILTNKPLSIGRQKNSSDIVQISPQSLALKLRPGLEQTLQVQVRQTEDYPVDLYYLMDLSASMDDDLNTIKELGSLLSKEMSKLTSNFRLGFGSFVEKPISPFMKTTPEEIANPCSSIPYFCLPTFGFKHILPLTNDAERFNEIVKNQKISANIDTPEGGFDAIMQAAVCKEKIGWRNDSLHLLVFVSDADSHFGMDSKLAGIVIPNDGLCHLDSKNEYSMSTILEYPTIGQLIDKLVQNNVLLIFAVTQEQVHLYENYAKLIPGATVGVLQKDSGNILQLIISAYEELRSEVELEVLGDTEGLNLSFTAICNTGIPVPHQKKCSHMKVGDTASFNVTVSLPNCERRSRHIILKPVGLGDALEILVSPECSCDCQKEVEVNSSKCNNGNGSFQCGVCACHPGHMGHHCECGEDTLSTESCKEAPGRPSCSGRGDCYCGQCVCHLSPYGNIYGPYCQCDNFSCVRHKGLLCGDNGDCDCGECVCRSGWTGEYCNCTTSTDPCVSEDGILCSGRGDCVCGKCICTNPGASGPTCERCPTCGDPCNSKRSCIECYLSADGQAQEECVDKCKLAGATINEEEDFSKDSFVSCSLQGENECLITFLLTTDNEGKTVIHSINEKDCPKPPNIPMIMLGVSLAILLIGVVLLCIWKLLVSFHDRKEVAKFEAERSKAKWQTGTNPLYRGSTSTFKNVTYKHKEKQKVDLSTDG</sequence>
<accession>Q8SQB8</accession>
<accession>Q0PE61</accession>
<feature type="signal peptide" evidence="4">
    <location>
        <begin position="1"/>
        <end position="21"/>
    </location>
</feature>
<feature type="chain" id="PRO_0000244819" description="Integrin beta-6">
    <location>
        <begin position="22"/>
        <end position="788"/>
    </location>
</feature>
<feature type="topological domain" description="Extracellular" evidence="4">
    <location>
        <begin position="22"/>
        <end position="709"/>
    </location>
</feature>
<feature type="transmembrane region" description="Helical" evidence="4">
    <location>
        <begin position="710"/>
        <end position="730"/>
    </location>
</feature>
<feature type="topological domain" description="Cytoplasmic" evidence="4">
    <location>
        <begin position="731"/>
        <end position="788"/>
    </location>
</feature>
<feature type="domain" description="PSI" evidence="4">
    <location>
        <begin position="22"/>
        <end position="71"/>
    </location>
</feature>
<feature type="domain" description="VWFA" evidence="1">
    <location>
        <begin position="131"/>
        <end position="371"/>
    </location>
</feature>
<feature type="domain" description="I-EGF 1" evidence="5">
    <location>
        <begin position="456"/>
        <end position="491"/>
    </location>
</feature>
<feature type="domain" description="I-EGF 2" evidence="5">
    <location>
        <begin position="492"/>
        <end position="538"/>
    </location>
</feature>
<feature type="domain" description="I-EGF 3" evidence="5">
    <location>
        <begin position="539"/>
        <end position="575"/>
    </location>
</feature>
<feature type="domain" description="I-EGF 4" evidence="5">
    <location>
        <begin position="576"/>
        <end position="615"/>
    </location>
</feature>
<feature type="region of interest" description="Interaction with HAX1" evidence="2">
    <location>
        <begin position="731"/>
        <end position="758"/>
    </location>
</feature>
<feature type="binding site" description="in MIDAS binding site" evidence="2">
    <location>
        <position position="140"/>
    </location>
    <ligand>
        <name>Mg(2+)</name>
        <dbReference type="ChEBI" id="CHEBI:18420"/>
    </ligand>
</feature>
<feature type="binding site" description="in MIDAS binding site" evidence="2">
    <location>
        <position position="142"/>
    </location>
    <ligand>
        <name>Mg(2+)</name>
        <dbReference type="ChEBI" id="CHEBI:18420"/>
    </ligand>
</feature>
<feature type="binding site" description="in ADMIDAS binding site" evidence="2">
    <location>
        <position position="144"/>
    </location>
    <ligand>
        <name>Ca(2+)</name>
        <dbReference type="ChEBI" id="CHEBI:29108"/>
        <label>1</label>
    </ligand>
</feature>
<feature type="binding site" description="in MIDAS binding site" evidence="1">
    <location>
        <position position="144"/>
    </location>
    <ligand>
        <name>Mg(2+)</name>
        <dbReference type="ChEBI" id="CHEBI:18420"/>
    </ligand>
</feature>
<feature type="binding site" description="in ADMIDAS binding site" evidence="2">
    <location>
        <position position="147"/>
    </location>
    <ligand>
        <name>Ca(2+)</name>
        <dbReference type="ChEBI" id="CHEBI:29108"/>
        <label>1</label>
    </ligand>
</feature>
<feature type="binding site" description="in ADMIDAS binding site" evidence="2">
    <location>
        <position position="148"/>
    </location>
    <ligand>
        <name>Ca(2+)</name>
        <dbReference type="ChEBI" id="CHEBI:29108"/>
        <label>1</label>
    </ligand>
</feature>
<feature type="binding site" description="in LIMBS binding site" evidence="2">
    <location>
        <position position="179"/>
    </location>
    <ligand>
        <name>Ca(2+)</name>
        <dbReference type="ChEBI" id="CHEBI:29108"/>
        <label>2</label>
    </ligand>
</feature>
<feature type="binding site" description="in LIMBS binding site" evidence="2">
    <location>
        <position position="235"/>
    </location>
    <ligand>
        <name>Ca(2+)</name>
        <dbReference type="ChEBI" id="CHEBI:29108"/>
        <label>2</label>
    </ligand>
</feature>
<feature type="binding site" description="in LIMBS binding site" evidence="2">
    <location>
        <position position="237"/>
    </location>
    <ligand>
        <name>Ca(2+)</name>
        <dbReference type="ChEBI" id="CHEBI:29108"/>
        <label>2</label>
    </ligand>
</feature>
<feature type="binding site" description="in LIMBS binding site" evidence="2">
    <location>
        <position position="239"/>
    </location>
    <ligand>
        <name>Ca(2+)</name>
        <dbReference type="ChEBI" id="CHEBI:29108"/>
        <label>2</label>
    </ligand>
</feature>
<feature type="binding site" description="in LIMBS binding site" evidence="2">
    <location>
        <position position="240"/>
    </location>
    <ligand>
        <name>Ca(2+)</name>
        <dbReference type="ChEBI" id="CHEBI:29108"/>
        <label>2</label>
    </ligand>
</feature>
<feature type="binding site" description="in MIDAS binding site" evidence="2">
    <location>
        <position position="240"/>
    </location>
    <ligand>
        <name>Mg(2+)</name>
        <dbReference type="ChEBI" id="CHEBI:18420"/>
    </ligand>
</feature>
<feature type="binding site" description="in ADMIDAS binding site and liganded-open conformation" evidence="1">
    <location>
        <position position="271"/>
    </location>
    <ligand>
        <name>Ca(2+)</name>
        <dbReference type="ChEBI" id="CHEBI:29108"/>
        <label>1</label>
    </ligand>
</feature>
<feature type="binding site" description="in ADMIDAS binding site and unliganded-closed conformation" evidence="2">
    <location>
        <position position="355"/>
    </location>
    <ligand>
        <name>Ca(2+)</name>
        <dbReference type="ChEBI" id="CHEBI:29108"/>
        <label>1</label>
    </ligand>
</feature>
<feature type="glycosylation site" description="N-linked (GlcNAc...) asparagine" evidence="4">
    <location>
        <position position="48"/>
    </location>
</feature>
<feature type="glycosylation site" description="N-linked (GlcNAc...) asparagine" evidence="4">
    <location>
        <position position="97"/>
    </location>
</feature>
<feature type="glycosylation site" description="N-linked (GlcNAc...) asparagine" evidence="4">
    <location>
        <position position="260"/>
    </location>
</feature>
<feature type="glycosylation site" description="N-linked (GlcNAc...) asparagine" evidence="4">
    <location>
        <position position="387"/>
    </location>
</feature>
<feature type="glycosylation site" description="N-linked (GlcNAc...) asparagine" evidence="4">
    <location>
        <position position="418"/>
    </location>
</feature>
<feature type="glycosylation site" description="N-linked (GlcNAc...) asparagine" evidence="4">
    <location>
        <position position="463"/>
    </location>
</feature>
<feature type="glycosylation site" description="N-linked (GlcNAc...) asparagine" evidence="4">
    <location>
        <position position="471"/>
    </location>
</feature>
<feature type="glycosylation site" description="N-linked (GlcNAc...) asparagine" evidence="4">
    <location>
        <position position="541"/>
    </location>
</feature>
<feature type="glycosylation site" description="N-linked (GlcNAc...) asparagine" evidence="4">
    <location>
        <position position="575"/>
    </location>
</feature>
<feature type="disulfide bond" evidence="2">
    <location>
        <begin position="23"/>
        <end position="41"/>
    </location>
</feature>
<feature type="disulfide bond" evidence="2">
    <location>
        <begin position="31"/>
        <end position="454"/>
    </location>
</feature>
<feature type="disulfide bond" evidence="2">
    <location>
        <begin position="34"/>
        <end position="59"/>
    </location>
</feature>
<feature type="disulfide bond" evidence="2">
    <location>
        <begin position="44"/>
        <end position="70"/>
    </location>
</feature>
<feature type="disulfide bond" evidence="2">
    <location>
        <begin position="197"/>
        <end position="204"/>
    </location>
</feature>
<feature type="disulfide bond" evidence="2">
    <location>
        <begin position="252"/>
        <end position="293"/>
    </location>
</feature>
<feature type="disulfide bond" evidence="2">
    <location>
        <begin position="394"/>
        <end position="406"/>
    </location>
</feature>
<feature type="disulfide bond" evidence="2">
    <location>
        <begin position="426"/>
        <end position="452"/>
    </location>
</feature>
<feature type="disulfide bond" evidence="5">
    <location>
        <begin position="456"/>
        <end position="476"/>
    </location>
</feature>
<feature type="disulfide bond" evidence="5">
    <location>
        <begin position="467"/>
        <end position="479"/>
    </location>
</feature>
<feature type="disulfide bond" evidence="5">
    <location>
        <begin position="481"/>
        <end position="490"/>
    </location>
</feature>
<feature type="disulfide bond" evidence="5">
    <location>
        <begin position="492"/>
        <end position="519"/>
    </location>
</feature>
<feature type="disulfide bond" evidence="5">
    <location>
        <begin position="502"/>
        <end position="517"/>
    </location>
</feature>
<feature type="disulfide bond" evidence="5">
    <location>
        <begin position="511"/>
        <end position="522"/>
    </location>
</feature>
<feature type="disulfide bond" evidence="5">
    <location>
        <begin position="524"/>
        <end position="537"/>
    </location>
</feature>
<feature type="disulfide bond" evidence="5">
    <location>
        <begin position="539"/>
        <end position="560"/>
    </location>
</feature>
<feature type="disulfide bond" evidence="5">
    <location>
        <begin position="544"/>
        <end position="558"/>
    </location>
</feature>
<feature type="disulfide bond" evidence="5">
    <location>
        <begin position="552"/>
        <end position="563"/>
    </location>
</feature>
<feature type="disulfide bond" evidence="5">
    <location>
        <begin position="565"/>
        <end position="574"/>
    </location>
</feature>
<feature type="disulfide bond" evidence="5">
    <location>
        <begin position="576"/>
        <end position="599"/>
    </location>
</feature>
<feature type="disulfide bond" evidence="5">
    <location>
        <begin position="583"/>
        <end position="597"/>
    </location>
</feature>
<feature type="disulfide bond" evidence="5">
    <location>
        <begin position="591"/>
        <end position="602"/>
    </location>
</feature>
<feature type="disulfide bond" evidence="5">
    <location>
        <begin position="604"/>
        <end position="614"/>
    </location>
</feature>
<feature type="disulfide bond" evidence="1">
    <location>
        <begin position="617"/>
        <end position="620"/>
    </location>
</feature>
<feature type="disulfide bond" evidence="1">
    <location>
        <begin position="624"/>
        <end position="670"/>
    </location>
</feature>
<feature type="disulfide bond" evidence="1">
    <location>
        <begin position="630"/>
        <end position="649"/>
    </location>
</feature>
<feature type="disulfide bond" evidence="1">
    <location>
        <begin position="633"/>
        <end position="645"/>
    </location>
</feature>
<feature type="disulfide bond" evidence="1">
    <location>
        <begin position="678"/>
        <end position="702"/>
    </location>
</feature>
<feature type="sequence conflict" description="In Ref. 2; ABH04286." evidence="6" ref="2">
    <original>Q</original>
    <variation>R</variation>
    <location>
        <position position="780"/>
    </location>
</feature>
<feature type="sequence conflict" description="In Ref. 2; ABH04286." evidence="6" ref="2">
    <original>L</original>
    <variation>F</variation>
    <location>
        <position position="784"/>
    </location>
</feature>